<dbReference type="EC" id="7.1.2.2" evidence="1"/>
<dbReference type="EMBL" id="CP000235">
    <property type="protein sequence ID" value="ABD43456.1"/>
    <property type="molecule type" value="Genomic_DNA"/>
</dbReference>
<dbReference type="RefSeq" id="WP_011451346.1">
    <property type="nucleotide sequence ID" value="NC_007797.1"/>
</dbReference>
<dbReference type="SMR" id="Q2GIG2"/>
<dbReference type="STRING" id="212042.APH_1334"/>
<dbReference type="PaxDb" id="212042-APH_1334"/>
<dbReference type="EnsemblBacteria" id="ABD43456">
    <property type="protein sequence ID" value="ABD43456"/>
    <property type="gene ID" value="APH_1334"/>
</dbReference>
<dbReference type="GeneID" id="92747800"/>
<dbReference type="KEGG" id="aph:APH_1334"/>
<dbReference type="eggNOG" id="COG0056">
    <property type="taxonomic scope" value="Bacteria"/>
</dbReference>
<dbReference type="HOGENOM" id="CLU_010091_2_1_5"/>
<dbReference type="Proteomes" id="UP000001943">
    <property type="component" value="Chromosome"/>
</dbReference>
<dbReference type="GO" id="GO:0005886">
    <property type="term" value="C:plasma membrane"/>
    <property type="evidence" value="ECO:0007669"/>
    <property type="project" value="UniProtKB-SubCell"/>
</dbReference>
<dbReference type="GO" id="GO:0045259">
    <property type="term" value="C:proton-transporting ATP synthase complex"/>
    <property type="evidence" value="ECO:0007669"/>
    <property type="project" value="UniProtKB-KW"/>
</dbReference>
<dbReference type="GO" id="GO:0043531">
    <property type="term" value="F:ADP binding"/>
    <property type="evidence" value="ECO:0007669"/>
    <property type="project" value="TreeGrafter"/>
</dbReference>
<dbReference type="GO" id="GO:0005524">
    <property type="term" value="F:ATP binding"/>
    <property type="evidence" value="ECO:0007669"/>
    <property type="project" value="UniProtKB-UniRule"/>
</dbReference>
<dbReference type="GO" id="GO:0046933">
    <property type="term" value="F:proton-transporting ATP synthase activity, rotational mechanism"/>
    <property type="evidence" value="ECO:0007669"/>
    <property type="project" value="UniProtKB-UniRule"/>
</dbReference>
<dbReference type="CDD" id="cd18113">
    <property type="entry name" value="ATP-synt_F1_alpha_C"/>
    <property type="match status" value="1"/>
</dbReference>
<dbReference type="CDD" id="cd18116">
    <property type="entry name" value="ATP-synt_F1_alpha_N"/>
    <property type="match status" value="1"/>
</dbReference>
<dbReference type="CDD" id="cd01132">
    <property type="entry name" value="F1-ATPase_alpha_CD"/>
    <property type="match status" value="1"/>
</dbReference>
<dbReference type="FunFam" id="1.20.150.20:FF:000001">
    <property type="entry name" value="ATP synthase subunit alpha"/>
    <property type="match status" value="1"/>
</dbReference>
<dbReference type="FunFam" id="3.40.50.300:FF:002432">
    <property type="entry name" value="ATP synthase subunit alpha, mitochondrial"/>
    <property type="match status" value="1"/>
</dbReference>
<dbReference type="Gene3D" id="2.40.30.20">
    <property type="match status" value="1"/>
</dbReference>
<dbReference type="Gene3D" id="1.20.150.20">
    <property type="entry name" value="ATP synthase alpha/beta chain, C-terminal domain"/>
    <property type="match status" value="1"/>
</dbReference>
<dbReference type="Gene3D" id="3.40.50.300">
    <property type="entry name" value="P-loop containing nucleotide triphosphate hydrolases"/>
    <property type="match status" value="1"/>
</dbReference>
<dbReference type="HAMAP" id="MF_01346">
    <property type="entry name" value="ATP_synth_alpha_bact"/>
    <property type="match status" value="1"/>
</dbReference>
<dbReference type="InterPro" id="IPR023366">
    <property type="entry name" value="ATP_synth_asu-like_sf"/>
</dbReference>
<dbReference type="InterPro" id="IPR000793">
    <property type="entry name" value="ATP_synth_asu_C"/>
</dbReference>
<dbReference type="InterPro" id="IPR038376">
    <property type="entry name" value="ATP_synth_asu_C_sf"/>
</dbReference>
<dbReference type="InterPro" id="IPR033732">
    <property type="entry name" value="ATP_synth_F1_a_nt-bd_dom"/>
</dbReference>
<dbReference type="InterPro" id="IPR005294">
    <property type="entry name" value="ATP_synth_F1_asu"/>
</dbReference>
<dbReference type="InterPro" id="IPR020003">
    <property type="entry name" value="ATPase_a/bsu_AS"/>
</dbReference>
<dbReference type="InterPro" id="IPR004100">
    <property type="entry name" value="ATPase_F1/V1/A1_a/bsu_N"/>
</dbReference>
<dbReference type="InterPro" id="IPR036121">
    <property type="entry name" value="ATPase_F1/V1/A1_a/bsu_N_sf"/>
</dbReference>
<dbReference type="InterPro" id="IPR000194">
    <property type="entry name" value="ATPase_F1/V1/A1_a/bsu_nucl-bd"/>
</dbReference>
<dbReference type="InterPro" id="IPR027417">
    <property type="entry name" value="P-loop_NTPase"/>
</dbReference>
<dbReference type="NCBIfam" id="TIGR00962">
    <property type="entry name" value="atpA"/>
    <property type="match status" value="1"/>
</dbReference>
<dbReference type="NCBIfam" id="NF009884">
    <property type="entry name" value="PRK13343.1"/>
    <property type="match status" value="1"/>
</dbReference>
<dbReference type="PANTHER" id="PTHR48082">
    <property type="entry name" value="ATP SYNTHASE SUBUNIT ALPHA, MITOCHONDRIAL"/>
    <property type="match status" value="1"/>
</dbReference>
<dbReference type="PANTHER" id="PTHR48082:SF2">
    <property type="entry name" value="ATP SYNTHASE SUBUNIT ALPHA, MITOCHONDRIAL"/>
    <property type="match status" value="1"/>
</dbReference>
<dbReference type="Pfam" id="PF00006">
    <property type="entry name" value="ATP-synt_ab"/>
    <property type="match status" value="1"/>
</dbReference>
<dbReference type="Pfam" id="PF00306">
    <property type="entry name" value="ATP-synt_ab_C"/>
    <property type="match status" value="1"/>
</dbReference>
<dbReference type="Pfam" id="PF02874">
    <property type="entry name" value="ATP-synt_ab_N"/>
    <property type="match status" value="1"/>
</dbReference>
<dbReference type="PIRSF" id="PIRSF039088">
    <property type="entry name" value="F_ATPase_subunit_alpha"/>
    <property type="match status" value="1"/>
</dbReference>
<dbReference type="SUPFAM" id="SSF47917">
    <property type="entry name" value="C-terminal domain of alpha and beta subunits of F1 ATP synthase"/>
    <property type="match status" value="1"/>
</dbReference>
<dbReference type="SUPFAM" id="SSF50615">
    <property type="entry name" value="N-terminal domain of alpha and beta subunits of F1 ATP synthase"/>
    <property type="match status" value="1"/>
</dbReference>
<dbReference type="SUPFAM" id="SSF52540">
    <property type="entry name" value="P-loop containing nucleoside triphosphate hydrolases"/>
    <property type="match status" value="1"/>
</dbReference>
<dbReference type="PROSITE" id="PS00152">
    <property type="entry name" value="ATPASE_ALPHA_BETA"/>
    <property type="match status" value="1"/>
</dbReference>
<sequence>MSGVSSGEVLKILRERIENFGGPVKAGSVGEVLSVKDGIAVVYGLHGAGFGETVAFASGVRGVISGLESDIASVVIFGEDREVKEGDSVECTGELMKVPVGFSLLGRVVSPLGMPLDGEGAISGCDGENPVEVKAPGIMARQPVSEPLQTGIKTIDMLIPIGRGQRELIIGDRKTGKTAIALDTIINQKRYNDRAASEKDKVYCIYVAIGQKNSSIARVVSKLCEAGAADYTIVVATGASDSVPLQYLAPYAACAMGEFFRDNGMHCLIVYDDLSKHAVAYRQMSLLLRRPPGREAYPGDVFYIHSRLLERAAKLSDALGGGSLTALPIIETQAGDVSAYIPTNVISITDGQIFLESELFHKGFRPAINVGLSVSRVGSAAQVKAVKKVAGSMKLSLAQYRELEDFARFGSDLDASSQAMLEKGRRMIELLKQGQYSPLSVEEQVAVMLAGSDSCIDAIPVGDMCRFERGLLEKLRIDHGDLMACLLEDDVRSKLLEVIRGFAVSF</sequence>
<gene>
    <name evidence="1" type="primary">atpA</name>
    <name type="ordered locus">APH_1334</name>
</gene>
<protein>
    <recommendedName>
        <fullName evidence="1">ATP synthase subunit alpha</fullName>
        <ecNumber evidence="1">7.1.2.2</ecNumber>
    </recommendedName>
    <alternativeName>
        <fullName evidence="1">ATP synthase F1 sector subunit alpha</fullName>
    </alternativeName>
    <alternativeName>
        <fullName evidence="1">F-ATPase subunit alpha</fullName>
    </alternativeName>
</protein>
<comment type="function">
    <text evidence="1">Produces ATP from ADP in the presence of a proton gradient across the membrane. The alpha chain is a regulatory subunit.</text>
</comment>
<comment type="catalytic activity">
    <reaction evidence="1">
        <text>ATP + H2O + 4 H(+)(in) = ADP + phosphate + 5 H(+)(out)</text>
        <dbReference type="Rhea" id="RHEA:57720"/>
        <dbReference type="ChEBI" id="CHEBI:15377"/>
        <dbReference type="ChEBI" id="CHEBI:15378"/>
        <dbReference type="ChEBI" id="CHEBI:30616"/>
        <dbReference type="ChEBI" id="CHEBI:43474"/>
        <dbReference type="ChEBI" id="CHEBI:456216"/>
        <dbReference type="EC" id="7.1.2.2"/>
    </reaction>
</comment>
<comment type="subunit">
    <text evidence="1">F-type ATPases have 2 components, CF(1) - the catalytic core - and CF(0) - the membrane proton channel. CF(1) has five subunits: alpha(3), beta(3), gamma(1), delta(1), epsilon(1). CF(0) has three main subunits: a(1), b(2) and c(9-12). The alpha and beta chains form an alternating ring which encloses part of the gamma chain. CF(1) is attached to CF(0) by a central stalk formed by the gamma and epsilon chains, while a peripheral stalk is formed by the delta and b chains.</text>
</comment>
<comment type="subcellular location">
    <subcellularLocation>
        <location evidence="1">Cell inner membrane</location>
        <topology evidence="1">Peripheral membrane protein</topology>
    </subcellularLocation>
</comment>
<comment type="similarity">
    <text evidence="1">Belongs to the ATPase alpha/beta chains family.</text>
</comment>
<accession>Q2GIG2</accession>
<reference key="1">
    <citation type="journal article" date="2006" name="PLoS Genet.">
        <title>Comparative genomics of emerging human ehrlichiosis agents.</title>
        <authorList>
            <person name="Dunning Hotopp J.C."/>
            <person name="Lin M."/>
            <person name="Madupu R."/>
            <person name="Crabtree J."/>
            <person name="Angiuoli S.V."/>
            <person name="Eisen J.A."/>
            <person name="Seshadri R."/>
            <person name="Ren Q."/>
            <person name="Wu M."/>
            <person name="Utterback T.R."/>
            <person name="Smith S."/>
            <person name="Lewis M."/>
            <person name="Khouri H."/>
            <person name="Zhang C."/>
            <person name="Niu H."/>
            <person name="Lin Q."/>
            <person name="Ohashi N."/>
            <person name="Zhi N."/>
            <person name="Nelson W.C."/>
            <person name="Brinkac L.M."/>
            <person name="Dodson R.J."/>
            <person name="Rosovitz M.J."/>
            <person name="Sundaram J.P."/>
            <person name="Daugherty S.C."/>
            <person name="Davidsen T."/>
            <person name="Durkin A.S."/>
            <person name="Gwinn M.L."/>
            <person name="Haft D.H."/>
            <person name="Selengut J.D."/>
            <person name="Sullivan S.A."/>
            <person name="Zafar N."/>
            <person name="Zhou L."/>
            <person name="Benahmed F."/>
            <person name="Forberger H."/>
            <person name="Halpin R."/>
            <person name="Mulligan S."/>
            <person name="Robinson J."/>
            <person name="White O."/>
            <person name="Rikihisa Y."/>
            <person name="Tettelin H."/>
        </authorList>
    </citation>
    <scope>NUCLEOTIDE SEQUENCE [LARGE SCALE GENOMIC DNA]</scope>
    <source>
        <strain>HZ</strain>
    </source>
</reference>
<keyword id="KW-0066">ATP synthesis</keyword>
<keyword id="KW-0067">ATP-binding</keyword>
<keyword id="KW-0997">Cell inner membrane</keyword>
<keyword id="KW-1003">Cell membrane</keyword>
<keyword id="KW-0139">CF(1)</keyword>
<keyword id="KW-0375">Hydrogen ion transport</keyword>
<keyword id="KW-0406">Ion transport</keyword>
<keyword id="KW-0472">Membrane</keyword>
<keyword id="KW-0547">Nucleotide-binding</keyword>
<keyword id="KW-1278">Translocase</keyword>
<keyword id="KW-0813">Transport</keyword>
<organism>
    <name type="scientific">Anaplasma phagocytophilum (strain HZ)</name>
    <dbReference type="NCBI Taxonomy" id="212042"/>
    <lineage>
        <taxon>Bacteria</taxon>
        <taxon>Pseudomonadati</taxon>
        <taxon>Pseudomonadota</taxon>
        <taxon>Alphaproteobacteria</taxon>
        <taxon>Rickettsiales</taxon>
        <taxon>Anaplasmataceae</taxon>
        <taxon>Anaplasma</taxon>
        <taxon>phagocytophilum group</taxon>
    </lineage>
</organism>
<evidence type="ECO:0000255" key="1">
    <source>
        <dbReference type="HAMAP-Rule" id="MF_01346"/>
    </source>
</evidence>
<proteinExistence type="inferred from homology"/>
<feature type="chain" id="PRO_0000238190" description="ATP synthase subunit alpha">
    <location>
        <begin position="1"/>
        <end position="506"/>
    </location>
</feature>
<feature type="binding site" evidence="1">
    <location>
        <begin position="171"/>
        <end position="178"/>
    </location>
    <ligand>
        <name>ATP</name>
        <dbReference type="ChEBI" id="CHEBI:30616"/>
    </ligand>
</feature>
<feature type="site" description="Required for activity" evidence="1">
    <location>
        <position position="373"/>
    </location>
</feature>
<name>ATPA_ANAPZ</name>